<proteinExistence type="inferred from homology"/>
<accession>A9KE31</accession>
<feature type="chain" id="PRO_1000077393" description="tRNA dimethylallyltransferase">
    <location>
        <begin position="1"/>
        <end position="311"/>
    </location>
</feature>
<feature type="region of interest" description="Interaction with substrate tRNA" evidence="1">
    <location>
        <begin position="37"/>
        <end position="40"/>
    </location>
</feature>
<feature type="region of interest" description="Interaction with substrate tRNA" evidence="1">
    <location>
        <begin position="161"/>
        <end position="165"/>
    </location>
</feature>
<feature type="binding site" evidence="1">
    <location>
        <begin position="12"/>
        <end position="19"/>
    </location>
    <ligand>
        <name>ATP</name>
        <dbReference type="ChEBI" id="CHEBI:30616"/>
    </ligand>
</feature>
<feature type="binding site" evidence="1">
    <location>
        <begin position="14"/>
        <end position="19"/>
    </location>
    <ligand>
        <name>substrate</name>
    </ligand>
</feature>
<feature type="site" description="Interaction with substrate tRNA" evidence="1">
    <location>
        <position position="103"/>
    </location>
</feature>
<feature type="site" description="Interaction with substrate tRNA" evidence="1">
    <location>
        <position position="125"/>
    </location>
</feature>
<protein>
    <recommendedName>
        <fullName evidence="1">tRNA dimethylallyltransferase</fullName>
        <ecNumber evidence="1">2.5.1.75</ecNumber>
    </recommendedName>
    <alternativeName>
        <fullName evidence="1">Dimethylallyl diphosphate:tRNA dimethylallyltransferase</fullName>
        <shortName evidence="1">DMAPP:tRNA dimethylallyltransferase</shortName>
        <shortName evidence="1">DMATase</shortName>
    </alternativeName>
    <alternativeName>
        <fullName evidence="1">Isopentenyl-diphosphate:tRNA isopentenyltransferase</fullName>
        <shortName evidence="1">IPP transferase</shortName>
        <shortName evidence="1">IPPT</shortName>
        <shortName evidence="1">IPTase</shortName>
    </alternativeName>
</protein>
<organism>
    <name type="scientific">Coxiella burnetii (strain Dugway 5J108-111)</name>
    <dbReference type="NCBI Taxonomy" id="434922"/>
    <lineage>
        <taxon>Bacteria</taxon>
        <taxon>Pseudomonadati</taxon>
        <taxon>Pseudomonadota</taxon>
        <taxon>Gammaproteobacteria</taxon>
        <taxon>Legionellales</taxon>
        <taxon>Coxiellaceae</taxon>
        <taxon>Coxiella</taxon>
    </lineage>
</organism>
<keyword id="KW-0067">ATP-binding</keyword>
<keyword id="KW-0460">Magnesium</keyword>
<keyword id="KW-0547">Nucleotide-binding</keyword>
<keyword id="KW-0808">Transferase</keyword>
<keyword id="KW-0819">tRNA processing</keyword>
<name>MIAA_COXBN</name>
<reference key="1">
    <citation type="journal article" date="2009" name="Infect. Immun.">
        <title>Comparative genomics reveal extensive transposon-mediated genomic plasticity and diversity among potential effector proteins within the genus Coxiella.</title>
        <authorList>
            <person name="Beare P.A."/>
            <person name="Unsworth N."/>
            <person name="Andoh M."/>
            <person name="Voth D.E."/>
            <person name="Omsland A."/>
            <person name="Gilk S.D."/>
            <person name="Williams K.P."/>
            <person name="Sobral B.W."/>
            <person name="Kupko J.J. III"/>
            <person name="Porcella S.F."/>
            <person name="Samuel J.E."/>
            <person name="Heinzen R.A."/>
        </authorList>
    </citation>
    <scope>NUCLEOTIDE SEQUENCE [LARGE SCALE GENOMIC DNA]</scope>
    <source>
        <strain>Dugway 5J108-111</strain>
    </source>
</reference>
<gene>
    <name evidence="1" type="primary">miaA</name>
    <name type="ordered locus">CBUD_1185</name>
</gene>
<dbReference type="EC" id="2.5.1.75" evidence="1"/>
<dbReference type="EMBL" id="CP000733">
    <property type="protein sequence ID" value="ABS77397.2"/>
    <property type="status" value="ALT_INIT"/>
    <property type="molecule type" value="Genomic_DNA"/>
</dbReference>
<dbReference type="RefSeq" id="WP_005768333.1">
    <property type="nucleotide sequence ID" value="NC_009727.1"/>
</dbReference>
<dbReference type="SMR" id="A9KE31"/>
<dbReference type="KEGG" id="cbd:CBUD_1185"/>
<dbReference type="HOGENOM" id="CLU_032616_0_0_6"/>
<dbReference type="Proteomes" id="UP000008555">
    <property type="component" value="Chromosome"/>
</dbReference>
<dbReference type="GO" id="GO:0005524">
    <property type="term" value="F:ATP binding"/>
    <property type="evidence" value="ECO:0007669"/>
    <property type="project" value="UniProtKB-UniRule"/>
</dbReference>
<dbReference type="GO" id="GO:0052381">
    <property type="term" value="F:tRNA dimethylallyltransferase activity"/>
    <property type="evidence" value="ECO:0007669"/>
    <property type="project" value="UniProtKB-UniRule"/>
</dbReference>
<dbReference type="GO" id="GO:0006400">
    <property type="term" value="P:tRNA modification"/>
    <property type="evidence" value="ECO:0007669"/>
    <property type="project" value="TreeGrafter"/>
</dbReference>
<dbReference type="FunFam" id="1.10.20.140:FF:000001">
    <property type="entry name" value="tRNA dimethylallyltransferase"/>
    <property type="match status" value="1"/>
</dbReference>
<dbReference type="Gene3D" id="1.10.20.140">
    <property type="match status" value="1"/>
</dbReference>
<dbReference type="Gene3D" id="3.40.50.300">
    <property type="entry name" value="P-loop containing nucleotide triphosphate hydrolases"/>
    <property type="match status" value="1"/>
</dbReference>
<dbReference type="HAMAP" id="MF_00185">
    <property type="entry name" value="IPP_trans"/>
    <property type="match status" value="1"/>
</dbReference>
<dbReference type="InterPro" id="IPR039657">
    <property type="entry name" value="Dimethylallyltransferase"/>
</dbReference>
<dbReference type="InterPro" id="IPR018022">
    <property type="entry name" value="IPT"/>
</dbReference>
<dbReference type="InterPro" id="IPR027417">
    <property type="entry name" value="P-loop_NTPase"/>
</dbReference>
<dbReference type="NCBIfam" id="TIGR00174">
    <property type="entry name" value="miaA"/>
    <property type="match status" value="1"/>
</dbReference>
<dbReference type="PANTHER" id="PTHR11088">
    <property type="entry name" value="TRNA DIMETHYLALLYLTRANSFERASE"/>
    <property type="match status" value="1"/>
</dbReference>
<dbReference type="PANTHER" id="PTHR11088:SF60">
    <property type="entry name" value="TRNA DIMETHYLALLYLTRANSFERASE"/>
    <property type="match status" value="1"/>
</dbReference>
<dbReference type="Pfam" id="PF01715">
    <property type="entry name" value="IPPT"/>
    <property type="match status" value="1"/>
</dbReference>
<dbReference type="SUPFAM" id="SSF52540">
    <property type="entry name" value="P-loop containing nucleoside triphosphate hydrolases"/>
    <property type="match status" value="2"/>
</dbReference>
<evidence type="ECO:0000255" key="1">
    <source>
        <dbReference type="HAMAP-Rule" id="MF_00185"/>
    </source>
</evidence>
<evidence type="ECO:0000305" key="2"/>
<comment type="function">
    <text evidence="1">Catalyzes the transfer of a dimethylallyl group onto the adenine at position 37 in tRNAs that read codons beginning with uridine, leading to the formation of N6-(dimethylallyl)adenosine (i(6)A).</text>
</comment>
<comment type="catalytic activity">
    <reaction evidence="1">
        <text>adenosine(37) in tRNA + dimethylallyl diphosphate = N(6)-dimethylallyladenosine(37) in tRNA + diphosphate</text>
        <dbReference type="Rhea" id="RHEA:26482"/>
        <dbReference type="Rhea" id="RHEA-COMP:10162"/>
        <dbReference type="Rhea" id="RHEA-COMP:10375"/>
        <dbReference type="ChEBI" id="CHEBI:33019"/>
        <dbReference type="ChEBI" id="CHEBI:57623"/>
        <dbReference type="ChEBI" id="CHEBI:74411"/>
        <dbReference type="ChEBI" id="CHEBI:74415"/>
        <dbReference type="EC" id="2.5.1.75"/>
    </reaction>
</comment>
<comment type="cofactor">
    <cofactor evidence="1">
        <name>Mg(2+)</name>
        <dbReference type="ChEBI" id="CHEBI:18420"/>
    </cofactor>
</comment>
<comment type="subunit">
    <text evidence="1">Monomer.</text>
</comment>
<comment type="similarity">
    <text evidence="1">Belongs to the IPP transferase family.</text>
</comment>
<comment type="sequence caution" evidence="2">
    <conflict type="erroneous initiation">
        <sequence resource="EMBL-CDS" id="ABS77397"/>
    </conflict>
</comment>
<sequence>MNKNPFIVCLMGPTASGKTDLAIALARKLPFEIISVDSAMVYRGLDIGTAKPNEEELQLTSHRLINICDPSFPYSAGQFYKDALSEIKTIEIRNRTPLLVGGTMLYFHILEQGFSDLPTADETVRKKIQEEAAQHGWAKIHERLNAIDPKSAARINPNDAQRIQRAFEVYETTGQPLSSYQSLKRFKALPYQFINLILAPENRSWLHQRIEKRFDQMLKNNFLEEVRQLYNRGDLNSDLPAIRTVGYRQVWKYLSGEYDYETMRHKAIAATRQLAKRQLTWLRRWPDAKWFNSEDKDLISQVVDYLKGIGM</sequence>